<proteinExistence type="inferred from homology"/>
<reference key="1">
    <citation type="journal article" date="2004" name="Nature">
        <title>Genome sequence of Silicibacter pomeroyi reveals adaptations to the marine environment.</title>
        <authorList>
            <person name="Moran M.A."/>
            <person name="Buchan A."/>
            <person name="Gonzalez J.M."/>
            <person name="Heidelberg J.F."/>
            <person name="Whitman W.B."/>
            <person name="Kiene R.P."/>
            <person name="Henriksen J.R."/>
            <person name="King G.M."/>
            <person name="Belas R."/>
            <person name="Fuqua C."/>
            <person name="Brinkac L.M."/>
            <person name="Lewis M."/>
            <person name="Johri S."/>
            <person name="Weaver B."/>
            <person name="Pai G."/>
            <person name="Eisen J.A."/>
            <person name="Rahe E."/>
            <person name="Sheldon W.M."/>
            <person name="Ye W."/>
            <person name="Miller T.R."/>
            <person name="Carlton J."/>
            <person name="Rasko D.A."/>
            <person name="Paulsen I.T."/>
            <person name="Ren Q."/>
            <person name="Daugherty S.C."/>
            <person name="DeBoy R.T."/>
            <person name="Dodson R.J."/>
            <person name="Durkin A.S."/>
            <person name="Madupu R."/>
            <person name="Nelson W.C."/>
            <person name="Sullivan S.A."/>
            <person name="Rosovitz M.J."/>
            <person name="Haft D.H."/>
            <person name="Selengut J."/>
            <person name="Ward N."/>
        </authorList>
    </citation>
    <scope>NUCLEOTIDE SEQUENCE [LARGE SCALE GENOMIC DNA]</scope>
    <source>
        <strain>ATCC 700808 / DSM 15171 / DSS-3</strain>
    </source>
</reference>
<reference key="2">
    <citation type="journal article" date="2014" name="Stand. Genomic Sci.">
        <title>An updated genome annotation for the model marine bacterium Ruegeria pomeroyi DSS-3.</title>
        <authorList>
            <person name="Rivers A.R."/>
            <person name="Smith C.B."/>
            <person name="Moran M.A."/>
        </authorList>
    </citation>
    <scope>GENOME REANNOTATION</scope>
    <source>
        <strain>ATCC 700808 / DSM 15171 / DSS-3</strain>
    </source>
</reference>
<sequence>MTNNLIAKAAIDRRLAEIVSPVIADLGYELVRIRLMSGKSTTLQIMADKPDGGIEVDDCAAISNAVSATLDVEDPILDAYTLEVSSPGIDRPLTRLKDFEMFEGYEAKIETTEMIDGRRRFRGELAGIEGNEVLINLDQNGETVTIGLEFDWLSDAKLVLTDDLIKEMLRQRKAAGVLNEDQFDEIVEEAPETGATTMARDGSEEETK</sequence>
<keyword id="KW-0963">Cytoplasm</keyword>
<keyword id="KW-1185">Reference proteome</keyword>
<keyword id="KW-0690">Ribosome biogenesis</keyword>
<name>RIMP_RUEPO</name>
<comment type="function">
    <text evidence="1">Required for maturation of 30S ribosomal subunits.</text>
</comment>
<comment type="subcellular location">
    <subcellularLocation>
        <location evidence="1">Cytoplasm</location>
    </subcellularLocation>
</comment>
<comment type="similarity">
    <text evidence="1">Belongs to the RimP family.</text>
</comment>
<gene>
    <name evidence="1" type="primary">rimP</name>
    <name type="ordered locus">SPO0064</name>
</gene>
<dbReference type="EMBL" id="CP000031">
    <property type="protein sequence ID" value="AAV93395.1"/>
    <property type="molecule type" value="Genomic_DNA"/>
</dbReference>
<dbReference type="RefSeq" id="WP_011045837.1">
    <property type="nucleotide sequence ID" value="NC_003911.12"/>
</dbReference>
<dbReference type="SMR" id="Q5LWL1"/>
<dbReference type="STRING" id="246200.SPO0064"/>
<dbReference type="PaxDb" id="246200-SPO0064"/>
<dbReference type="KEGG" id="sil:SPO0064"/>
<dbReference type="eggNOG" id="COG0779">
    <property type="taxonomic scope" value="Bacteria"/>
</dbReference>
<dbReference type="HOGENOM" id="CLU_070525_0_1_5"/>
<dbReference type="OrthoDB" id="9805006at2"/>
<dbReference type="Proteomes" id="UP000001023">
    <property type="component" value="Chromosome"/>
</dbReference>
<dbReference type="GO" id="GO:0005829">
    <property type="term" value="C:cytosol"/>
    <property type="evidence" value="ECO:0007669"/>
    <property type="project" value="TreeGrafter"/>
</dbReference>
<dbReference type="GO" id="GO:0000028">
    <property type="term" value="P:ribosomal small subunit assembly"/>
    <property type="evidence" value="ECO:0007669"/>
    <property type="project" value="TreeGrafter"/>
</dbReference>
<dbReference type="GO" id="GO:0006412">
    <property type="term" value="P:translation"/>
    <property type="evidence" value="ECO:0007669"/>
    <property type="project" value="TreeGrafter"/>
</dbReference>
<dbReference type="CDD" id="cd01734">
    <property type="entry name" value="YlxS_C"/>
    <property type="match status" value="1"/>
</dbReference>
<dbReference type="FunFam" id="3.30.300.70:FF:000001">
    <property type="entry name" value="Ribosome maturation factor RimP"/>
    <property type="match status" value="1"/>
</dbReference>
<dbReference type="Gene3D" id="2.30.30.180">
    <property type="entry name" value="Ribosome maturation factor RimP, C-terminal domain"/>
    <property type="match status" value="1"/>
</dbReference>
<dbReference type="Gene3D" id="3.30.300.70">
    <property type="entry name" value="RimP-like superfamily, N-terminal"/>
    <property type="match status" value="1"/>
</dbReference>
<dbReference type="HAMAP" id="MF_01077">
    <property type="entry name" value="RimP"/>
    <property type="match status" value="1"/>
</dbReference>
<dbReference type="InterPro" id="IPR003728">
    <property type="entry name" value="Ribosome_maturation_RimP"/>
</dbReference>
<dbReference type="InterPro" id="IPR028998">
    <property type="entry name" value="RimP_C"/>
</dbReference>
<dbReference type="InterPro" id="IPR036847">
    <property type="entry name" value="RimP_C_sf"/>
</dbReference>
<dbReference type="InterPro" id="IPR028989">
    <property type="entry name" value="RimP_N"/>
</dbReference>
<dbReference type="InterPro" id="IPR035956">
    <property type="entry name" value="RimP_N_sf"/>
</dbReference>
<dbReference type="NCBIfam" id="NF000932">
    <property type="entry name" value="PRK00092.2-5"/>
    <property type="match status" value="1"/>
</dbReference>
<dbReference type="PANTHER" id="PTHR33867">
    <property type="entry name" value="RIBOSOME MATURATION FACTOR RIMP"/>
    <property type="match status" value="1"/>
</dbReference>
<dbReference type="PANTHER" id="PTHR33867:SF1">
    <property type="entry name" value="RIBOSOME MATURATION FACTOR RIMP"/>
    <property type="match status" value="1"/>
</dbReference>
<dbReference type="Pfam" id="PF17384">
    <property type="entry name" value="DUF150_C"/>
    <property type="match status" value="1"/>
</dbReference>
<dbReference type="Pfam" id="PF02576">
    <property type="entry name" value="RimP_N"/>
    <property type="match status" value="1"/>
</dbReference>
<dbReference type="SUPFAM" id="SSF74942">
    <property type="entry name" value="YhbC-like, C-terminal domain"/>
    <property type="match status" value="1"/>
</dbReference>
<dbReference type="SUPFAM" id="SSF75420">
    <property type="entry name" value="YhbC-like, N-terminal domain"/>
    <property type="match status" value="1"/>
</dbReference>
<feature type="chain" id="PRO_0000229279" description="Ribosome maturation factor RimP">
    <location>
        <begin position="1"/>
        <end position="208"/>
    </location>
</feature>
<feature type="region of interest" description="Disordered" evidence="2">
    <location>
        <begin position="189"/>
        <end position="208"/>
    </location>
</feature>
<protein>
    <recommendedName>
        <fullName evidence="1">Ribosome maturation factor RimP</fullName>
    </recommendedName>
</protein>
<organism>
    <name type="scientific">Ruegeria pomeroyi (strain ATCC 700808 / DSM 15171 / DSS-3)</name>
    <name type="common">Silicibacter pomeroyi</name>
    <dbReference type="NCBI Taxonomy" id="246200"/>
    <lineage>
        <taxon>Bacteria</taxon>
        <taxon>Pseudomonadati</taxon>
        <taxon>Pseudomonadota</taxon>
        <taxon>Alphaproteobacteria</taxon>
        <taxon>Rhodobacterales</taxon>
        <taxon>Roseobacteraceae</taxon>
        <taxon>Ruegeria</taxon>
    </lineage>
</organism>
<accession>Q5LWL1</accession>
<evidence type="ECO:0000255" key="1">
    <source>
        <dbReference type="HAMAP-Rule" id="MF_01077"/>
    </source>
</evidence>
<evidence type="ECO:0000256" key="2">
    <source>
        <dbReference type="SAM" id="MobiDB-lite"/>
    </source>
</evidence>